<evidence type="ECO:0000250" key="1">
    <source>
        <dbReference type="UniProtKB" id="O43424"/>
    </source>
</evidence>
<evidence type="ECO:0000250" key="2">
    <source>
        <dbReference type="UniProtKB" id="Q61627"/>
    </source>
</evidence>
<evidence type="ECO:0000255" key="3"/>
<evidence type="ECO:0000256" key="4">
    <source>
        <dbReference type="SAM" id="MobiDB-lite"/>
    </source>
</evidence>
<evidence type="ECO:0000269" key="5">
    <source>
    </source>
</evidence>
<evidence type="ECO:0000269" key="6">
    <source>
    </source>
</evidence>
<evidence type="ECO:0000303" key="7">
    <source>
    </source>
</evidence>
<evidence type="ECO:0000303" key="8">
    <source>
    </source>
</evidence>
<evidence type="ECO:0000305" key="9"/>
<evidence type="ECO:0000305" key="10">
    <source>
    </source>
</evidence>
<evidence type="ECO:0000312" key="11">
    <source>
        <dbReference type="HGNC" id="HGNC:4575"/>
    </source>
</evidence>
<evidence type="ECO:0007744" key="12">
    <source>
        <dbReference type="PDB" id="8BLJ"/>
    </source>
</evidence>
<evidence type="ECO:0007744" key="13">
    <source>
        <dbReference type="PDB" id="8BN2"/>
    </source>
</evidence>
<evidence type="ECO:0007744" key="14">
    <source>
        <dbReference type="PDB" id="8BN5"/>
    </source>
</evidence>
<evidence type="ECO:0007829" key="15">
    <source>
        <dbReference type="PDB" id="8BN2"/>
    </source>
</evidence>
<proteinExistence type="evidence at protein level"/>
<dbReference type="EMBL" id="AK127168">
    <property type="protein sequence ID" value="BAG54447.1"/>
    <property type="molecule type" value="mRNA"/>
</dbReference>
<dbReference type="EMBL" id="AK302192">
    <property type="protein sequence ID" value="BAH13646.1"/>
    <property type="molecule type" value="mRNA"/>
</dbReference>
<dbReference type="EMBL" id="AC022028">
    <property type="status" value="NOT_ANNOTATED_CDS"/>
    <property type="molecule type" value="Genomic_DNA"/>
</dbReference>
<dbReference type="EMBL" id="AC073162">
    <property type="status" value="NOT_ANNOTATED_CDS"/>
    <property type="molecule type" value="Genomic_DNA"/>
</dbReference>
<dbReference type="EMBL" id="AC079955">
    <property type="status" value="NOT_ANNOTATED_CDS"/>
    <property type="molecule type" value="Genomic_DNA"/>
</dbReference>
<dbReference type="EMBL" id="AL451059">
    <property type="status" value="NOT_ANNOTATED_CDS"/>
    <property type="molecule type" value="Genomic_DNA"/>
</dbReference>
<dbReference type="EMBL" id="AL596135">
    <property type="status" value="NOT_ANNOTATED_CDS"/>
    <property type="molecule type" value="Genomic_DNA"/>
</dbReference>
<dbReference type="EMBL" id="AL683834">
    <property type="status" value="NOT_ANNOTATED_CDS"/>
    <property type="molecule type" value="Genomic_DNA"/>
</dbReference>
<dbReference type="EMBL" id="AL732479">
    <property type="status" value="NOT_ANNOTATED_CDS"/>
    <property type="molecule type" value="Genomic_DNA"/>
</dbReference>
<dbReference type="EMBL" id="AL844892">
    <property type="status" value="NOT_ANNOTATED_CDS"/>
    <property type="molecule type" value="Genomic_DNA"/>
</dbReference>
<dbReference type="EMBL" id="CH471142">
    <property type="protein sequence ID" value="EAW80340.1"/>
    <property type="molecule type" value="Genomic_DNA"/>
</dbReference>
<dbReference type="EMBL" id="BC039263">
    <property type="protein sequence ID" value="AAH39263.1"/>
    <property type="molecule type" value="mRNA"/>
</dbReference>
<dbReference type="EMBL" id="AB033046">
    <property type="protein sequence ID" value="BAA86534.1"/>
    <property type="molecule type" value="mRNA"/>
</dbReference>
<dbReference type="CCDS" id="CCDS31236.1">
    <molecule id="Q9ULK0-1"/>
</dbReference>
<dbReference type="RefSeq" id="NP_060021.1">
    <molecule id="Q9ULK0-1"/>
    <property type="nucleotide sequence ID" value="NM_017551.3"/>
</dbReference>
<dbReference type="RefSeq" id="XP_047281078.1">
    <molecule id="Q9ULK0-2"/>
    <property type="nucleotide sequence ID" value="XM_047425122.1"/>
</dbReference>
<dbReference type="RefSeq" id="XP_047281079.1">
    <molecule id="Q9ULK0-2"/>
    <property type="nucleotide sequence ID" value="XM_047425123.1"/>
</dbReference>
<dbReference type="RefSeq" id="XP_054221640.1">
    <molecule id="Q9ULK0-2"/>
    <property type="nucleotide sequence ID" value="XM_054365665.1"/>
</dbReference>
<dbReference type="RefSeq" id="XP_054221641.1">
    <molecule id="Q9ULK0-2"/>
    <property type="nucleotide sequence ID" value="XM_054365666.1"/>
</dbReference>
<dbReference type="PDB" id="8BLJ">
    <property type="method" value="X-ray"/>
    <property type="resolution" value="2.18 A"/>
    <property type="chains" value="A/B/C/D/E/F=436-547, A/B/C/D/E/F=664-823"/>
</dbReference>
<dbReference type="PDB" id="8BN2">
    <property type="method" value="X-ray"/>
    <property type="resolution" value="1.63 A"/>
    <property type="chains" value="A/B=436-547, A/B=664-823"/>
</dbReference>
<dbReference type="PDB" id="8BN5">
    <property type="method" value="X-ray"/>
    <property type="resolution" value="1.90 A"/>
    <property type="chains" value="A/B=436-547, A/B=664-823"/>
</dbReference>
<dbReference type="PDBsum" id="8BLJ"/>
<dbReference type="PDBsum" id="8BN2"/>
<dbReference type="PDBsum" id="8BN5"/>
<dbReference type="SMR" id="Q9ULK0"/>
<dbReference type="BioGRID" id="109151">
    <property type="interactions" value="21"/>
</dbReference>
<dbReference type="FunCoup" id="Q9ULK0">
    <property type="interactions" value="616"/>
</dbReference>
<dbReference type="IntAct" id="Q9ULK0">
    <property type="interactions" value="10"/>
</dbReference>
<dbReference type="STRING" id="9606.ENSP00000330148"/>
<dbReference type="ChEMBL" id="CHEMBL4524129"/>
<dbReference type="TCDB" id="1.A.10.1.34">
    <property type="family name" value="the glutamate-gated ion channel (gic) family of neurotransmitter receptors"/>
</dbReference>
<dbReference type="GlyCosmos" id="Q9ULK0">
    <property type="glycosylation" value="4 sites, No reported glycans"/>
</dbReference>
<dbReference type="GlyGen" id="Q9ULK0">
    <property type="glycosylation" value="4 sites, 2 N-linked glycans (3 sites)"/>
</dbReference>
<dbReference type="iPTMnet" id="Q9ULK0"/>
<dbReference type="PhosphoSitePlus" id="Q9ULK0"/>
<dbReference type="SwissPalm" id="Q9ULK0"/>
<dbReference type="BioMuta" id="GRID1"/>
<dbReference type="DMDM" id="38372397"/>
<dbReference type="jPOST" id="Q9ULK0"/>
<dbReference type="MassIVE" id="Q9ULK0"/>
<dbReference type="PaxDb" id="9606-ENSP00000330148"/>
<dbReference type="PeptideAtlas" id="Q9ULK0"/>
<dbReference type="ProteomicsDB" id="6880"/>
<dbReference type="ProteomicsDB" id="85053">
    <molecule id="Q9ULK0-1"/>
</dbReference>
<dbReference type="Antibodypedia" id="30060">
    <property type="antibodies" value="241 antibodies from 29 providers"/>
</dbReference>
<dbReference type="DNASU" id="2894"/>
<dbReference type="Ensembl" id="ENST00000327946.12">
    <molecule id="Q9ULK0-1"/>
    <property type="protein sequence ID" value="ENSP00000330148.7"/>
    <property type="gene ID" value="ENSG00000182771.19"/>
</dbReference>
<dbReference type="GeneID" id="2894"/>
<dbReference type="KEGG" id="hsa:2894"/>
<dbReference type="MANE-Select" id="ENST00000327946.12">
    <property type="protein sequence ID" value="ENSP00000330148.7"/>
    <property type="RefSeq nucleotide sequence ID" value="NM_017551.3"/>
    <property type="RefSeq protein sequence ID" value="NP_060021.1"/>
</dbReference>
<dbReference type="UCSC" id="uc001kdl.2">
    <molecule id="Q9ULK0-1"/>
    <property type="organism name" value="human"/>
</dbReference>
<dbReference type="AGR" id="HGNC:4575"/>
<dbReference type="CTD" id="2894"/>
<dbReference type="DisGeNET" id="2894"/>
<dbReference type="GeneCards" id="GRID1"/>
<dbReference type="HGNC" id="HGNC:4575">
    <property type="gene designation" value="GRID1"/>
</dbReference>
<dbReference type="HPA" id="ENSG00000182771">
    <property type="expression patterns" value="Tissue enhanced (brain)"/>
</dbReference>
<dbReference type="MIM" id="610659">
    <property type="type" value="gene"/>
</dbReference>
<dbReference type="neXtProt" id="NX_Q9ULK0"/>
<dbReference type="OpenTargets" id="ENSG00000182771"/>
<dbReference type="PharmGKB" id="PA28970"/>
<dbReference type="VEuPathDB" id="HostDB:ENSG00000182771"/>
<dbReference type="eggNOG" id="KOG1052">
    <property type="taxonomic scope" value="Eukaryota"/>
</dbReference>
<dbReference type="GeneTree" id="ENSGT00940000155910"/>
<dbReference type="HOGENOM" id="CLU_007257_9_0_1"/>
<dbReference type="InParanoid" id="Q9ULK0"/>
<dbReference type="OMA" id="QIFPLAR"/>
<dbReference type="OrthoDB" id="5984008at2759"/>
<dbReference type="PAN-GO" id="Q9ULK0">
    <property type="GO annotations" value="6 GO annotations based on evolutionary models"/>
</dbReference>
<dbReference type="PhylomeDB" id="Q9ULK0"/>
<dbReference type="TreeFam" id="TF352434"/>
<dbReference type="PathwayCommons" id="Q9ULK0"/>
<dbReference type="SignaLink" id="Q9ULK0"/>
<dbReference type="SIGNOR" id="Q9ULK0"/>
<dbReference type="BioGRID-ORCS" id="2894">
    <property type="hits" value="15 hits in 1164 CRISPR screens"/>
</dbReference>
<dbReference type="ChiTaRS" id="GRID1">
    <property type="organism name" value="human"/>
</dbReference>
<dbReference type="GeneWiki" id="GRID1"/>
<dbReference type="GenomeRNAi" id="2894"/>
<dbReference type="Pharos" id="Q9ULK0">
    <property type="development level" value="Tbio"/>
</dbReference>
<dbReference type="PRO" id="PR:Q9ULK0"/>
<dbReference type="Proteomes" id="UP000005640">
    <property type="component" value="Chromosome 10"/>
</dbReference>
<dbReference type="RNAct" id="Q9ULK0">
    <property type="molecule type" value="protein"/>
</dbReference>
<dbReference type="Bgee" id="ENSG00000182771">
    <property type="expression patterns" value="Expressed in prefrontal cortex and 129 other cell types or tissues"/>
</dbReference>
<dbReference type="ExpressionAtlas" id="Q9ULK0">
    <property type="expression patterns" value="baseline and differential"/>
</dbReference>
<dbReference type="GO" id="GO:0032281">
    <property type="term" value="C:AMPA glutamate receptor complex"/>
    <property type="evidence" value="ECO:0000318"/>
    <property type="project" value="GO_Central"/>
</dbReference>
<dbReference type="GO" id="GO:0043197">
    <property type="term" value="C:dendritic spine"/>
    <property type="evidence" value="ECO:0000318"/>
    <property type="project" value="GO_Central"/>
</dbReference>
<dbReference type="GO" id="GO:0070062">
    <property type="term" value="C:extracellular exosome"/>
    <property type="evidence" value="ECO:0007005"/>
    <property type="project" value="UniProtKB"/>
</dbReference>
<dbReference type="GO" id="GO:0098982">
    <property type="term" value="C:GABA-ergic synapse"/>
    <property type="evidence" value="ECO:0007669"/>
    <property type="project" value="Ensembl"/>
</dbReference>
<dbReference type="GO" id="GO:0098978">
    <property type="term" value="C:glutamatergic synapse"/>
    <property type="evidence" value="ECO:0007669"/>
    <property type="project" value="Ensembl"/>
</dbReference>
<dbReference type="GO" id="GO:0005886">
    <property type="term" value="C:plasma membrane"/>
    <property type="evidence" value="ECO:0000318"/>
    <property type="project" value="GO_Central"/>
</dbReference>
<dbReference type="GO" id="GO:0098839">
    <property type="term" value="C:postsynaptic density membrane"/>
    <property type="evidence" value="ECO:0000250"/>
    <property type="project" value="UniProt"/>
</dbReference>
<dbReference type="GO" id="GO:0045211">
    <property type="term" value="C:postsynaptic membrane"/>
    <property type="evidence" value="ECO:0000314"/>
    <property type="project" value="UniProt"/>
</dbReference>
<dbReference type="GO" id="GO:0098820">
    <property type="term" value="C:trans-synaptic protein complex"/>
    <property type="evidence" value="ECO:0000250"/>
    <property type="project" value="UniProt"/>
</dbReference>
<dbReference type="GO" id="GO:0004971">
    <property type="term" value="F:AMPA glutamate receptor activity"/>
    <property type="evidence" value="ECO:0000318"/>
    <property type="project" value="GO_Central"/>
</dbReference>
<dbReference type="GO" id="GO:0099530">
    <property type="term" value="F:G protein-coupled receptor activity involved in regulation of postsynaptic membrane potential"/>
    <property type="evidence" value="ECO:0000314"/>
    <property type="project" value="UniProt"/>
</dbReference>
<dbReference type="GO" id="GO:0016917">
    <property type="term" value="F:GABA receptor activity"/>
    <property type="evidence" value="ECO:0000314"/>
    <property type="project" value="UniProt"/>
</dbReference>
<dbReference type="GO" id="GO:0042802">
    <property type="term" value="F:identical protein binding"/>
    <property type="evidence" value="ECO:0007669"/>
    <property type="project" value="Ensembl"/>
</dbReference>
<dbReference type="GO" id="GO:1904315">
    <property type="term" value="F:transmitter-gated monoatomic ion channel activity involved in regulation of postsynaptic membrane potential"/>
    <property type="evidence" value="ECO:0000250"/>
    <property type="project" value="UniProt"/>
</dbReference>
<dbReference type="GO" id="GO:0050804">
    <property type="term" value="P:modulation of chemical synaptic transmission"/>
    <property type="evidence" value="ECO:0000318"/>
    <property type="project" value="GO_Central"/>
</dbReference>
<dbReference type="GO" id="GO:0031914">
    <property type="term" value="P:negative regulation of synaptic plasticity"/>
    <property type="evidence" value="ECO:0000314"/>
    <property type="project" value="UniProt"/>
</dbReference>
<dbReference type="GO" id="GO:0007200">
    <property type="term" value="P:phospholipase C-activating G protein-coupled receptor signaling pathway"/>
    <property type="evidence" value="ECO:0000314"/>
    <property type="project" value="UniProt"/>
</dbReference>
<dbReference type="GO" id="GO:0099175">
    <property type="term" value="P:regulation of postsynapse organization"/>
    <property type="evidence" value="ECO:0007669"/>
    <property type="project" value="Ensembl"/>
</dbReference>
<dbReference type="GO" id="GO:0099072">
    <property type="term" value="P:regulation of postsynaptic membrane neurotransmitter receptor levels"/>
    <property type="evidence" value="ECO:0007669"/>
    <property type="project" value="Ensembl"/>
</dbReference>
<dbReference type="GO" id="GO:0035176">
    <property type="term" value="P:social behavior"/>
    <property type="evidence" value="ECO:0000250"/>
    <property type="project" value="CAFA"/>
</dbReference>
<dbReference type="GO" id="GO:0099538">
    <property type="term" value="P:synaptic signaling via neuropeptide"/>
    <property type="evidence" value="ECO:0000314"/>
    <property type="project" value="UniProt"/>
</dbReference>
<dbReference type="GO" id="GO:0035249">
    <property type="term" value="P:synaptic transmission, glutamatergic"/>
    <property type="evidence" value="ECO:0000318"/>
    <property type="project" value="GO_Central"/>
</dbReference>
<dbReference type="CDD" id="cd06392">
    <property type="entry name" value="PBP1_iGluR_delta_1"/>
    <property type="match status" value="1"/>
</dbReference>
<dbReference type="CDD" id="cd13730">
    <property type="entry name" value="PBP2_iGluR_delta_1"/>
    <property type="match status" value="1"/>
</dbReference>
<dbReference type="FunFam" id="3.40.50.2300:FF:001145">
    <property type="match status" value="1"/>
</dbReference>
<dbReference type="FunFam" id="3.40.50.2300:FF:000520">
    <property type="entry name" value="Glutamate ionotropic receptor delta type subunit 1"/>
    <property type="match status" value="1"/>
</dbReference>
<dbReference type="FunFam" id="3.40.190.10:FF:000024">
    <property type="entry name" value="Glutamate receptor, ionotropic, delta 1"/>
    <property type="match status" value="1"/>
</dbReference>
<dbReference type="FunFam" id="3.40.50.2300:FF:000220">
    <property type="entry name" value="Glutamate receptor, ionotropic, delta 1"/>
    <property type="match status" value="1"/>
</dbReference>
<dbReference type="FunFam" id="1.10.287.70:FF:000045">
    <property type="entry name" value="Glutamate receptor, ionotropic, delta 2"/>
    <property type="match status" value="1"/>
</dbReference>
<dbReference type="FunFam" id="3.40.190.10:FF:000040">
    <property type="entry name" value="Glutamate receptor, ionotropic, delta 2"/>
    <property type="match status" value="1"/>
</dbReference>
<dbReference type="Gene3D" id="1.10.287.70">
    <property type="match status" value="1"/>
</dbReference>
<dbReference type="Gene3D" id="3.40.50.2300">
    <property type="match status" value="2"/>
</dbReference>
<dbReference type="Gene3D" id="3.40.190.10">
    <property type="entry name" value="Periplasmic binding protein-like II"/>
    <property type="match status" value="2"/>
</dbReference>
<dbReference type="InterPro" id="IPR001828">
    <property type="entry name" value="ANF_lig-bd_rcpt"/>
</dbReference>
<dbReference type="InterPro" id="IPR019594">
    <property type="entry name" value="Glu/Gly-bd"/>
</dbReference>
<dbReference type="InterPro" id="IPR001508">
    <property type="entry name" value="Iono_Glu_rcpt_met"/>
</dbReference>
<dbReference type="InterPro" id="IPR015683">
    <property type="entry name" value="Ionotropic_Glu_rcpt"/>
</dbReference>
<dbReference type="InterPro" id="IPR001320">
    <property type="entry name" value="Iontro_rcpt_C"/>
</dbReference>
<dbReference type="InterPro" id="IPR028082">
    <property type="entry name" value="Peripla_BP_I"/>
</dbReference>
<dbReference type="PANTHER" id="PTHR18966">
    <property type="entry name" value="IONOTROPIC GLUTAMATE RECEPTOR"/>
    <property type="match status" value="1"/>
</dbReference>
<dbReference type="Pfam" id="PF01094">
    <property type="entry name" value="ANF_receptor"/>
    <property type="match status" value="1"/>
</dbReference>
<dbReference type="Pfam" id="PF00060">
    <property type="entry name" value="Lig_chan"/>
    <property type="match status" value="1"/>
</dbReference>
<dbReference type="Pfam" id="PF10613">
    <property type="entry name" value="Lig_chan-Glu_bd"/>
    <property type="match status" value="1"/>
</dbReference>
<dbReference type="PRINTS" id="PR00177">
    <property type="entry name" value="NMDARECEPTOR"/>
</dbReference>
<dbReference type="SMART" id="SM00918">
    <property type="entry name" value="Lig_chan-Glu_bd"/>
    <property type="match status" value="1"/>
</dbReference>
<dbReference type="SMART" id="SM00079">
    <property type="entry name" value="PBPe"/>
    <property type="match status" value="1"/>
</dbReference>
<dbReference type="SUPFAM" id="SSF53822">
    <property type="entry name" value="Periplasmic binding protein-like I"/>
    <property type="match status" value="1"/>
</dbReference>
<dbReference type="SUPFAM" id="SSF53850">
    <property type="entry name" value="Periplasmic binding protein-like II"/>
    <property type="match status" value="1"/>
</dbReference>
<name>GRID1_HUMAN</name>
<protein>
    <recommendedName>
        <fullName evidence="9">Glutamate receptor ionotropic, delta-1</fullName>
        <shortName evidence="8">GluD1</shortName>
        <shortName>GluR delta-1 subunit</shortName>
    </recommendedName>
</protein>
<reference key="1">
    <citation type="journal article" date="2004" name="Nat. Genet.">
        <title>Complete sequencing and characterization of 21,243 full-length human cDNAs.</title>
        <authorList>
            <person name="Ota T."/>
            <person name="Suzuki Y."/>
            <person name="Nishikawa T."/>
            <person name="Otsuki T."/>
            <person name="Sugiyama T."/>
            <person name="Irie R."/>
            <person name="Wakamatsu A."/>
            <person name="Hayashi K."/>
            <person name="Sato H."/>
            <person name="Nagai K."/>
            <person name="Kimura K."/>
            <person name="Makita H."/>
            <person name="Sekine M."/>
            <person name="Obayashi M."/>
            <person name="Nishi T."/>
            <person name="Shibahara T."/>
            <person name="Tanaka T."/>
            <person name="Ishii S."/>
            <person name="Yamamoto J."/>
            <person name="Saito K."/>
            <person name="Kawai Y."/>
            <person name="Isono Y."/>
            <person name="Nakamura Y."/>
            <person name="Nagahari K."/>
            <person name="Murakami K."/>
            <person name="Yasuda T."/>
            <person name="Iwayanagi T."/>
            <person name="Wagatsuma M."/>
            <person name="Shiratori A."/>
            <person name="Sudo H."/>
            <person name="Hosoiri T."/>
            <person name="Kaku Y."/>
            <person name="Kodaira H."/>
            <person name="Kondo H."/>
            <person name="Sugawara M."/>
            <person name="Takahashi M."/>
            <person name="Kanda K."/>
            <person name="Yokoi T."/>
            <person name="Furuya T."/>
            <person name="Kikkawa E."/>
            <person name="Omura Y."/>
            <person name="Abe K."/>
            <person name="Kamihara K."/>
            <person name="Katsuta N."/>
            <person name="Sato K."/>
            <person name="Tanikawa M."/>
            <person name="Yamazaki M."/>
            <person name="Ninomiya K."/>
            <person name="Ishibashi T."/>
            <person name="Yamashita H."/>
            <person name="Murakawa K."/>
            <person name="Fujimori K."/>
            <person name="Tanai H."/>
            <person name="Kimata M."/>
            <person name="Watanabe M."/>
            <person name="Hiraoka S."/>
            <person name="Chiba Y."/>
            <person name="Ishida S."/>
            <person name="Ono Y."/>
            <person name="Takiguchi S."/>
            <person name="Watanabe S."/>
            <person name="Yosida M."/>
            <person name="Hotuta T."/>
            <person name="Kusano J."/>
            <person name="Kanehori K."/>
            <person name="Takahashi-Fujii A."/>
            <person name="Hara H."/>
            <person name="Tanase T.-O."/>
            <person name="Nomura Y."/>
            <person name="Togiya S."/>
            <person name="Komai F."/>
            <person name="Hara R."/>
            <person name="Takeuchi K."/>
            <person name="Arita M."/>
            <person name="Imose N."/>
            <person name="Musashino K."/>
            <person name="Yuuki H."/>
            <person name="Oshima A."/>
            <person name="Sasaki N."/>
            <person name="Aotsuka S."/>
            <person name="Yoshikawa Y."/>
            <person name="Matsunawa H."/>
            <person name="Ichihara T."/>
            <person name="Shiohata N."/>
            <person name="Sano S."/>
            <person name="Moriya S."/>
            <person name="Momiyama H."/>
            <person name="Satoh N."/>
            <person name="Takami S."/>
            <person name="Terashima Y."/>
            <person name="Suzuki O."/>
            <person name="Nakagawa S."/>
            <person name="Senoh A."/>
            <person name="Mizoguchi H."/>
            <person name="Goto Y."/>
            <person name="Shimizu F."/>
            <person name="Wakebe H."/>
            <person name="Hishigaki H."/>
            <person name="Watanabe T."/>
            <person name="Sugiyama A."/>
            <person name="Takemoto M."/>
            <person name="Kawakami B."/>
            <person name="Yamazaki M."/>
            <person name="Watanabe K."/>
            <person name="Kumagai A."/>
            <person name="Itakura S."/>
            <person name="Fukuzumi Y."/>
            <person name="Fujimori Y."/>
            <person name="Komiyama M."/>
            <person name="Tashiro H."/>
            <person name="Tanigami A."/>
            <person name="Fujiwara T."/>
            <person name="Ono T."/>
            <person name="Yamada K."/>
            <person name="Fujii Y."/>
            <person name="Ozaki K."/>
            <person name="Hirao M."/>
            <person name="Ohmori Y."/>
            <person name="Kawabata A."/>
            <person name="Hikiji T."/>
            <person name="Kobatake N."/>
            <person name="Inagaki H."/>
            <person name="Ikema Y."/>
            <person name="Okamoto S."/>
            <person name="Okitani R."/>
            <person name="Kawakami T."/>
            <person name="Noguchi S."/>
            <person name="Itoh T."/>
            <person name="Shigeta K."/>
            <person name="Senba T."/>
            <person name="Matsumura K."/>
            <person name="Nakajima Y."/>
            <person name="Mizuno T."/>
            <person name="Morinaga M."/>
            <person name="Sasaki M."/>
            <person name="Togashi T."/>
            <person name="Oyama M."/>
            <person name="Hata H."/>
            <person name="Watanabe M."/>
            <person name="Komatsu T."/>
            <person name="Mizushima-Sugano J."/>
            <person name="Satoh T."/>
            <person name="Shirai Y."/>
            <person name="Takahashi Y."/>
            <person name="Nakagawa K."/>
            <person name="Okumura K."/>
            <person name="Nagase T."/>
            <person name="Nomura N."/>
            <person name="Kikuchi H."/>
            <person name="Masuho Y."/>
            <person name="Yamashita R."/>
            <person name="Nakai K."/>
            <person name="Yada T."/>
            <person name="Nakamura Y."/>
            <person name="Ohara O."/>
            <person name="Isogai T."/>
            <person name="Sugano S."/>
        </authorList>
    </citation>
    <scope>NUCLEOTIDE SEQUENCE [LARGE SCALE MRNA] (ISOFORMS 1 AND 2)</scope>
    <source>
        <tissue>Caudate nucleus</tissue>
        <tissue>Testis</tissue>
    </source>
</reference>
<reference key="2">
    <citation type="journal article" date="2004" name="Nature">
        <title>The DNA sequence and comparative analysis of human chromosome 10.</title>
        <authorList>
            <person name="Deloukas P."/>
            <person name="Earthrowl M.E."/>
            <person name="Grafham D.V."/>
            <person name="Rubenfield M."/>
            <person name="French L."/>
            <person name="Steward C.A."/>
            <person name="Sims S.K."/>
            <person name="Jones M.C."/>
            <person name="Searle S."/>
            <person name="Scott C."/>
            <person name="Howe K."/>
            <person name="Hunt S.E."/>
            <person name="Andrews T.D."/>
            <person name="Gilbert J.G.R."/>
            <person name="Swarbreck D."/>
            <person name="Ashurst J.L."/>
            <person name="Taylor A."/>
            <person name="Battles J."/>
            <person name="Bird C.P."/>
            <person name="Ainscough R."/>
            <person name="Almeida J.P."/>
            <person name="Ashwell R.I.S."/>
            <person name="Ambrose K.D."/>
            <person name="Babbage A.K."/>
            <person name="Bagguley C.L."/>
            <person name="Bailey J."/>
            <person name="Banerjee R."/>
            <person name="Bates K."/>
            <person name="Beasley H."/>
            <person name="Bray-Allen S."/>
            <person name="Brown A.J."/>
            <person name="Brown J.Y."/>
            <person name="Burford D.C."/>
            <person name="Burrill W."/>
            <person name="Burton J."/>
            <person name="Cahill P."/>
            <person name="Camire D."/>
            <person name="Carter N.P."/>
            <person name="Chapman J.C."/>
            <person name="Clark S.Y."/>
            <person name="Clarke G."/>
            <person name="Clee C.M."/>
            <person name="Clegg S."/>
            <person name="Corby N."/>
            <person name="Coulson A."/>
            <person name="Dhami P."/>
            <person name="Dutta I."/>
            <person name="Dunn M."/>
            <person name="Faulkner L."/>
            <person name="Frankish A."/>
            <person name="Frankland J.A."/>
            <person name="Garner P."/>
            <person name="Garnett J."/>
            <person name="Gribble S."/>
            <person name="Griffiths C."/>
            <person name="Grocock R."/>
            <person name="Gustafson E."/>
            <person name="Hammond S."/>
            <person name="Harley J.L."/>
            <person name="Hart E."/>
            <person name="Heath P.D."/>
            <person name="Ho T.P."/>
            <person name="Hopkins B."/>
            <person name="Horne J."/>
            <person name="Howden P.J."/>
            <person name="Huckle E."/>
            <person name="Hynds C."/>
            <person name="Johnson C."/>
            <person name="Johnson D."/>
            <person name="Kana A."/>
            <person name="Kay M."/>
            <person name="Kimberley A.M."/>
            <person name="Kershaw J.K."/>
            <person name="Kokkinaki M."/>
            <person name="Laird G.K."/>
            <person name="Lawlor S."/>
            <person name="Lee H.M."/>
            <person name="Leongamornlert D.A."/>
            <person name="Laird G."/>
            <person name="Lloyd C."/>
            <person name="Lloyd D.M."/>
            <person name="Loveland J."/>
            <person name="Lovell J."/>
            <person name="McLaren S."/>
            <person name="McLay K.E."/>
            <person name="McMurray A."/>
            <person name="Mashreghi-Mohammadi M."/>
            <person name="Matthews L."/>
            <person name="Milne S."/>
            <person name="Nickerson T."/>
            <person name="Nguyen M."/>
            <person name="Overton-Larty E."/>
            <person name="Palmer S.A."/>
            <person name="Pearce A.V."/>
            <person name="Peck A.I."/>
            <person name="Pelan S."/>
            <person name="Phillimore B."/>
            <person name="Porter K."/>
            <person name="Rice C.M."/>
            <person name="Rogosin A."/>
            <person name="Ross M.T."/>
            <person name="Sarafidou T."/>
            <person name="Sehra H.K."/>
            <person name="Shownkeen R."/>
            <person name="Skuce C.D."/>
            <person name="Smith M."/>
            <person name="Standring L."/>
            <person name="Sycamore N."/>
            <person name="Tester J."/>
            <person name="Thorpe A."/>
            <person name="Torcasso W."/>
            <person name="Tracey A."/>
            <person name="Tromans A."/>
            <person name="Tsolas J."/>
            <person name="Wall M."/>
            <person name="Walsh J."/>
            <person name="Wang H."/>
            <person name="Weinstock K."/>
            <person name="West A.P."/>
            <person name="Willey D.L."/>
            <person name="Whitehead S.L."/>
            <person name="Wilming L."/>
            <person name="Wray P.W."/>
            <person name="Young L."/>
            <person name="Chen Y."/>
            <person name="Lovering R.C."/>
            <person name="Moschonas N.K."/>
            <person name="Siebert R."/>
            <person name="Fechtel K."/>
            <person name="Bentley D."/>
            <person name="Durbin R.M."/>
            <person name="Hubbard T."/>
            <person name="Doucette-Stamm L."/>
            <person name="Beck S."/>
            <person name="Smith D.R."/>
            <person name="Rogers J."/>
        </authorList>
    </citation>
    <scope>NUCLEOTIDE SEQUENCE [LARGE SCALE GENOMIC DNA]</scope>
</reference>
<reference key="3">
    <citation type="submission" date="2005-09" db="EMBL/GenBank/DDBJ databases">
        <authorList>
            <person name="Mural R.J."/>
            <person name="Istrail S."/>
            <person name="Sutton G.G."/>
            <person name="Florea L."/>
            <person name="Halpern A.L."/>
            <person name="Mobarry C.M."/>
            <person name="Lippert R."/>
            <person name="Walenz B."/>
            <person name="Shatkay H."/>
            <person name="Dew I."/>
            <person name="Miller J.R."/>
            <person name="Flanigan M.J."/>
            <person name="Edwards N.J."/>
            <person name="Bolanos R."/>
            <person name="Fasulo D."/>
            <person name="Halldorsson B.V."/>
            <person name="Hannenhalli S."/>
            <person name="Turner R."/>
            <person name="Yooseph S."/>
            <person name="Lu F."/>
            <person name="Nusskern D.R."/>
            <person name="Shue B.C."/>
            <person name="Zheng X.H."/>
            <person name="Zhong F."/>
            <person name="Delcher A.L."/>
            <person name="Huson D.H."/>
            <person name="Kravitz S.A."/>
            <person name="Mouchard L."/>
            <person name="Reinert K."/>
            <person name="Remington K.A."/>
            <person name="Clark A.G."/>
            <person name="Waterman M.S."/>
            <person name="Eichler E.E."/>
            <person name="Adams M.D."/>
            <person name="Hunkapiller M.W."/>
            <person name="Myers E.W."/>
            <person name="Venter J.C."/>
        </authorList>
    </citation>
    <scope>NUCLEOTIDE SEQUENCE [LARGE SCALE GENOMIC DNA]</scope>
</reference>
<reference key="4">
    <citation type="journal article" date="2004" name="Genome Res.">
        <title>The status, quality, and expansion of the NIH full-length cDNA project: the Mammalian Gene Collection (MGC).</title>
        <authorList>
            <consortium name="The MGC Project Team"/>
        </authorList>
    </citation>
    <scope>NUCLEOTIDE SEQUENCE [LARGE SCALE MRNA] OF 1-609 (ISOFORM 1)</scope>
    <source>
        <tissue>Brain</tissue>
    </source>
</reference>
<reference key="5">
    <citation type="journal article" date="1999" name="DNA Res.">
        <title>Prediction of the coding sequences of unidentified human genes. XV. The complete sequences of 100 new cDNA clones from brain which code for large proteins in vitro.</title>
        <authorList>
            <person name="Nagase T."/>
            <person name="Ishikawa K."/>
            <person name="Kikuno R."/>
            <person name="Hirosawa M."/>
            <person name="Nomura N."/>
            <person name="Ohara O."/>
        </authorList>
    </citation>
    <scope>NUCLEOTIDE SEQUENCE [LARGE SCALE MRNA] OF 219-1009 (ISOFORM 1)</scope>
    <source>
        <tissue>Brain</tissue>
    </source>
</reference>
<reference key="6">
    <citation type="journal article" date="2024" name="Proc. Natl. Acad. Sci. U.S.A.">
        <title>Lack of evidence for direct ligand-gated ion channel activity of GluD receptors.</title>
        <authorList>
            <person name="Itoh M."/>
            <person name="Piot L."/>
            <person name="Mony L."/>
            <person name="Paoletti P."/>
            <person name="Yuzaki M."/>
        </authorList>
    </citation>
    <scope>FUNCTION</scope>
    <scope>CAUTION</scope>
</reference>
<reference evidence="12 13 14" key="7">
    <citation type="journal article" date="2023" name="Science">
        <title>GluD1 binds GABA and controls inhibitory plasticity.</title>
        <authorList>
            <person name="Piot L."/>
            <person name="Heroven C."/>
            <person name="Bossi S."/>
            <person name="Zamith J."/>
            <person name="Malinauskas T."/>
            <person name="Johnson C."/>
            <person name="Wennagel D."/>
            <person name="Stroebel D."/>
            <person name="Charrier C."/>
            <person name="Aricescu A.R."/>
            <person name="Mony L."/>
            <person name="Paoletti P."/>
        </authorList>
    </citation>
    <scope>X-RAY CRYSTALLOGRAPHY (1.63 ANGSTROMS) OF 436-547 AND 664-823 IN COMPLEX WITH CA(2+)</scope>
    <scope>GLYCOSYLATION AT ASN-498</scope>
    <scope>SUBCELLULAR LOCATION</scope>
    <scope>FUNCTION</scope>
    <scope>MUTAGENESIS OF GLU-446 AND 645-CYS--ALA-654</scope>
    <scope>SUBUNIT</scope>
</reference>
<organism>
    <name type="scientific">Homo sapiens</name>
    <name type="common">Human</name>
    <dbReference type="NCBI Taxonomy" id="9606"/>
    <lineage>
        <taxon>Eukaryota</taxon>
        <taxon>Metazoa</taxon>
        <taxon>Chordata</taxon>
        <taxon>Craniata</taxon>
        <taxon>Vertebrata</taxon>
        <taxon>Euteleostomi</taxon>
        <taxon>Mammalia</taxon>
        <taxon>Eutheria</taxon>
        <taxon>Euarchontoglires</taxon>
        <taxon>Primates</taxon>
        <taxon>Haplorrhini</taxon>
        <taxon>Catarrhini</taxon>
        <taxon>Hominidae</taxon>
        <taxon>Homo</taxon>
    </lineage>
</organism>
<comment type="function">
    <text evidence="1 2 5 6">Member of the ionotropic glutamate receptor family, which plays a crucial role in synaptic organization and signal transduction in the central nervous system. Although it shares structural features with ionotropic glutamate receptors, does not bind glutamate as a primary ligand (PubMed:38060673). Instead, forms trans-synaptic adhesion complexes with presynaptic neurexins and cerebellins, regulating NMDA and AMPA receptor activity and influencing synaptic plasticity through signal transduction (By similarity). In the presence of neurexins and cerebellins, forms cation-selective channels that are proposed to be gated by glycine and D-serine (By similarity). However, recent research disputes this ligand-gated cation channel activity (PubMed:39052831). Cation-selective ion channel can be triggered by GRM1 in dopaminergic neurons (By similarity). Also acts as a receptor for GABA, modulating inhibitory synaptic plasticity through non-ionotropic mechanisms (PubMed:38060673).</text>
</comment>
<comment type="catalytic activity">
    <reaction evidence="1">
        <text>Ca(2+)(in) = Ca(2+)(out)</text>
        <dbReference type="Rhea" id="RHEA:29671"/>
        <dbReference type="ChEBI" id="CHEBI:29108"/>
    </reaction>
</comment>
<comment type="catalytic activity">
    <reaction evidence="1">
        <text>Na(+)(in) = Na(+)(out)</text>
        <dbReference type="Rhea" id="RHEA:34963"/>
        <dbReference type="ChEBI" id="CHEBI:29101"/>
    </reaction>
</comment>
<comment type="subunit">
    <text evidence="2 5">Homodimer (PubMed:38060673). Interacts (via extracellular N-terminal domain) with CBLN1 (via C1q domain), and more weakly with CBLN2; the interactions mediate the trans-synaptic adhesion complexes also with neurexins and are required for ligand-gated cation channel activity.</text>
</comment>
<comment type="interaction">
    <interactant intactId="EBI-17496373">
        <id>Q9ULK0</id>
    </interactant>
    <interactant intactId="EBI-715554">
        <id>P68871</id>
        <label>HBB</label>
    </interactant>
    <organismsDiffer>false</organismsDiffer>
    <experiments>2</experiments>
</comment>
<comment type="subcellular location">
    <subcellularLocation>
        <location evidence="10">Postsynaptic cell membrane</location>
        <topology evidence="3">Multi-pass membrane protein</topology>
    </subcellularLocation>
</comment>
<comment type="alternative products">
    <event type="alternative splicing"/>
    <isoform>
        <id>Q9ULK0-1</id>
        <name>1</name>
        <sequence type="displayed"/>
    </isoform>
    <isoform>
        <id>Q9ULK0-2</id>
        <name>2</name>
        <sequence type="described" ref="VSP_057019"/>
    </isoform>
</comment>
<comment type="similarity">
    <text evidence="9">Belongs to the glutamate-gated ion channel (TC 1.A.10.1) family. GRID1 subfamily.</text>
</comment>
<comment type="caution">
    <text evidence="2 6">The ligand-gated cation channel activity triggered by glycine and D-serine, first reported in an article, has been a subject of controversy (By similarity). These findings have been challenged by more recent research (PubMed:39052831).</text>
</comment>
<sequence length="1009" mass="112131">MEALTLWLLPWICQCVSVRADSIIHIGAIFEENAAKDDRVFQLAVSDLSLNDDILQSEKITYSIKVIEANNPFQAVQEACDLMTQGILALVTSTGCASANALQSLTDAMHIPHLFVQRNPGGSPRTACHLNPSPDGEAYTLASRPPVRLNDVMLRLVTELRWQKFVMFYDSEYDIRGLQSFLDQASRLGLDVSLQKVDKNISHVFTSLFTTMKTEELNRYRDTLRRAILLLSPQGAHSFINEAVETNLASKDSHWVFVNEEISDPEILDLVHSALGRMTVVRQIFPSAKDNQKCTRNNHRISSLLCDPQEGYLQMLQISNLYLYDSVLMLANAFHRKLEDRKWHSMASLNCIRKSTKPWNGGRSMLDTIKKGHITGLTGVMEFREDSSNPYVQFEILGTTYSETFGKDMRKLATWDSEKGLNGSLQERPMGSRLQGLTLKVVTVLEEPFVMVAENILGQPKRYKGFSIDVLDALAKALGFKYEIYQAPDGRYGHQLHNTSWNGMIGELISKRADLAISAITITPERESVVDFSKRYMDYSVGILIKKPEEKISIFSLFAPFDFAVWACIAAAIPVVGVLIFVLNRIQAVRAQSAAQPRPSASATLHSAIWIVYGAFVQQGGESSVNSMAMRIVMGSWWLFTLIVCSSYTANLAAFLTVSRMDNPIRTFQDLSKQVEMSYGTVRDSAVYEYFRAKGTNPLEQDSTFAELWRTISKNGGADNCVSSPSEGIRKAKKGNYAFLWDVAVVEYAALTDDDCSVTVIGNSISSKGYGIALQHGSPYRDLFSQRILELQDTGDLDVLKQKWWPHMGRCDLTSHASAQADGKSLKLHSFAGVFCILAIGLLLACLVAALELWWNSNRCHQETPKEDKEVNLEQVHRRMNSLMDEDIAHKQISPASIELSALEMGGLAPTQTLEPTREYQNTQLSVSTFLPEQSSHGTSRTLSSGPSSNLPLPLSSSATMPSMQCKHRSPNGGLFRQSPVKTPIPMSFQPVPGGVLPEALDTSHGTSI</sequence>
<accession>Q9ULK0</accession>
<accession>B3KXD5</accession>
<accession>B7Z7L0</accession>
<accession>Q8IXT3</accession>
<gene>
    <name evidence="11" type="primary">GRID1</name>
    <name type="synonym">KIAA1220</name>
</gene>
<keyword id="KW-0002">3D-structure</keyword>
<keyword id="KW-0025">Alternative splicing</keyword>
<keyword id="KW-1003">Cell membrane</keyword>
<keyword id="KW-1015">Disulfide bond</keyword>
<keyword id="KW-0325">Glycoprotein</keyword>
<keyword id="KW-0407">Ion channel</keyword>
<keyword id="KW-0406">Ion transport</keyword>
<keyword id="KW-1071">Ligand-gated ion channel</keyword>
<keyword id="KW-0472">Membrane</keyword>
<keyword id="KW-0628">Postsynaptic cell membrane</keyword>
<keyword id="KW-1267">Proteomics identification</keyword>
<keyword id="KW-0675">Receptor</keyword>
<keyword id="KW-1185">Reference proteome</keyword>
<keyword id="KW-0732">Signal</keyword>
<keyword id="KW-0770">Synapse</keyword>
<keyword id="KW-0812">Transmembrane</keyword>
<keyword id="KW-1133">Transmembrane helix</keyword>
<keyword id="KW-0813">Transport</keyword>
<feature type="signal peptide" evidence="3">
    <location>
        <begin position="1"/>
        <end position="20"/>
    </location>
</feature>
<feature type="chain" id="PRO_0000011561" description="Glutamate receptor ionotropic, delta-1">
    <location>
        <begin position="21"/>
        <end position="1009"/>
    </location>
</feature>
<feature type="topological domain" description="Extracellular" evidence="3">
    <location>
        <begin position="21"/>
        <end position="562"/>
    </location>
</feature>
<feature type="transmembrane region" description="Helical" evidence="3">
    <location>
        <begin position="563"/>
        <end position="583"/>
    </location>
</feature>
<feature type="topological domain" description="Cytoplasmic" evidence="3">
    <location>
        <begin position="584"/>
        <end position="637"/>
    </location>
</feature>
<feature type="transmembrane region" description="Helical" evidence="3">
    <location>
        <begin position="638"/>
        <end position="658"/>
    </location>
</feature>
<feature type="topological domain" description="Extracellular" evidence="3">
    <location>
        <begin position="659"/>
        <end position="830"/>
    </location>
</feature>
<feature type="transmembrane region" description="Helical" evidence="3">
    <location>
        <begin position="831"/>
        <end position="851"/>
    </location>
</feature>
<feature type="topological domain" description="Cytoplasmic" evidence="3">
    <location>
        <begin position="852"/>
        <end position="1009"/>
    </location>
</feature>
<feature type="region of interest" description="Interaction with CBLN1" evidence="2">
    <location>
        <begin position="21"/>
        <end position="436"/>
    </location>
</feature>
<feature type="region of interest" description="Disordered" evidence="4">
    <location>
        <begin position="930"/>
        <end position="954"/>
    </location>
</feature>
<feature type="compositionally biased region" description="Polar residues" evidence="4">
    <location>
        <begin position="930"/>
        <end position="942"/>
    </location>
</feature>
<feature type="compositionally biased region" description="Low complexity" evidence="4">
    <location>
        <begin position="943"/>
        <end position="954"/>
    </location>
</feature>
<feature type="binding site" evidence="5 12 13 14">
    <location>
        <position position="527"/>
    </location>
    <ligand>
        <name>Ca(2+)</name>
        <dbReference type="ChEBI" id="CHEBI:29108"/>
        <label>1</label>
    </ligand>
</feature>
<feature type="binding site" evidence="5 12 13 14">
    <location>
        <position position="530"/>
    </location>
    <ligand>
        <name>Ca(2+)</name>
        <dbReference type="ChEBI" id="CHEBI:29108"/>
        <label>1</label>
    </ligand>
</feature>
<feature type="binding site" evidence="5 12 13 14">
    <location>
        <position position="531"/>
    </location>
    <ligand>
        <name>Ca(2+)</name>
        <dbReference type="ChEBI" id="CHEBI:29108"/>
        <label>1</label>
    </ligand>
</feature>
<feature type="binding site" evidence="5 12">
    <location>
        <position position="753"/>
    </location>
    <ligand>
        <name>Ca(2+)</name>
        <dbReference type="ChEBI" id="CHEBI:29108"/>
        <label>2</label>
    </ligand>
</feature>
<feature type="binding site" evidence="5 12">
    <location>
        <position position="755"/>
    </location>
    <ligand>
        <name>Ca(2+)</name>
        <dbReference type="ChEBI" id="CHEBI:29108"/>
        <label>2</label>
    </ligand>
</feature>
<feature type="binding site" evidence="5 12">
    <location>
        <position position="757"/>
    </location>
    <ligand>
        <name>Ca(2+)</name>
        <dbReference type="ChEBI" id="CHEBI:29108"/>
        <label>2</label>
    </ligand>
</feature>
<feature type="site" description="Essential for dimerization" evidence="2">
    <location>
        <position position="73"/>
    </location>
</feature>
<feature type="glycosylation site" description="N-linked (GlcNAc...) asparagine" evidence="3">
    <location>
        <position position="131"/>
    </location>
</feature>
<feature type="glycosylation site" description="N-linked (GlcNAc...) asparagine" evidence="3">
    <location>
        <position position="200"/>
    </location>
</feature>
<feature type="glycosylation site" description="N-linked (GlcNAc...) asparagine" evidence="3">
    <location>
        <position position="422"/>
    </location>
</feature>
<feature type="glycosylation site" description="N-linked (GlcNAc...) asparagine" evidence="5 12 13 14">
    <location>
        <position position="498"/>
    </location>
</feature>
<feature type="disulfide bond" evidence="2">
    <location>
        <begin position="80"/>
        <end position="351"/>
    </location>
</feature>
<feature type="disulfide bond" evidence="2">
    <location>
        <begin position="96"/>
        <end position="128"/>
    </location>
</feature>
<feature type="disulfide bond" evidence="2">
    <location>
        <begin position="294"/>
        <end position="306"/>
    </location>
</feature>
<feature type="splice variant" id="VSP_057019" description="In isoform 2." evidence="7">
    <location>
        <begin position="1"/>
        <end position="429"/>
    </location>
</feature>
<feature type="sequence variant" id="VAR_022011" description="In dbSNP:rs2306265.">
    <original>V</original>
    <variation>I</variation>
    <location>
        <position position="529"/>
    </location>
</feature>
<feature type="mutagenesis site" description="Loss of GABA recognition. No effect on serine recognition." evidence="5">
    <original>E</original>
    <variation>Q</variation>
    <location>
        <position position="446"/>
    </location>
</feature>
<feature type="mutagenesis site" description="Constitutively open the extracellular-ligand-gated ion channel. Potentiated by GABA." evidence="5">
    <original>CSSYTANLAA</original>
    <variation>ISSYTANLAT</variation>
    <location>
        <begin position="645"/>
        <end position="654"/>
    </location>
</feature>
<feature type="strand" evidence="15">
    <location>
        <begin position="438"/>
        <end position="443"/>
    </location>
</feature>
<feature type="turn" evidence="15">
    <location>
        <begin position="447"/>
        <end position="449"/>
    </location>
</feature>
<feature type="strand" evidence="15">
    <location>
        <begin position="450"/>
        <end position="454"/>
    </location>
</feature>
<feature type="strand" evidence="15">
    <location>
        <begin position="462"/>
        <end position="465"/>
    </location>
</feature>
<feature type="helix" evidence="15">
    <location>
        <begin position="466"/>
        <end position="478"/>
    </location>
</feature>
<feature type="strand" evidence="15">
    <location>
        <begin position="481"/>
        <end position="486"/>
    </location>
</feature>
<feature type="helix" evidence="15">
    <location>
        <begin position="503"/>
        <end position="509"/>
    </location>
</feature>
<feature type="strand" evidence="15">
    <location>
        <begin position="514"/>
        <end position="516"/>
    </location>
</feature>
<feature type="helix" evidence="15">
    <location>
        <begin position="524"/>
        <end position="527"/>
    </location>
</feature>
<feature type="strand" evidence="15">
    <location>
        <begin position="530"/>
        <end position="532"/>
    </location>
</feature>
<feature type="strand" evidence="15">
    <location>
        <begin position="536"/>
        <end position="539"/>
    </location>
</feature>
<feature type="strand" evidence="15">
    <location>
        <begin position="541"/>
        <end position="547"/>
    </location>
</feature>
<feature type="helix" evidence="15">
    <location>
        <begin position="668"/>
        <end position="672"/>
    </location>
</feature>
<feature type="strand" evidence="15">
    <location>
        <begin position="678"/>
        <end position="680"/>
    </location>
</feature>
<feature type="helix" evidence="15">
    <location>
        <begin position="686"/>
        <end position="695"/>
    </location>
</feature>
<feature type="strand" evidence="15">
    <location>
        <begin position="700"/>
        <end position="702"/>
    </location>
</feature>
<feature type="helix" evidence="15">
    <location>
        <begin position="704"/>
        <end position="712"/>
    </location>
</feature>
<feature type="turn" evidence="15">
    <location>
        <begin position="713"/>
        <end position="720"/>
    </location>
</feature>
<feature type="strand" evidence="15">
    <location>
        <begin position="722"/>
        <end position="724"/>
    </location>
</feature>
<feature type="helix" evidence="15">
    <location>
        <begin position="725"/>
        <end position="734"/>
    </location>
</feature>
<feature type="strand" evidence="15">
    <location>
        <begin position="735"/>
        <end position="742"/>
    </location>
</feature>
<feature type="helix" evidence="15">
    <location>
        <begin position="743"/>
        <end position="751"/>
    </location>
</feature>
<feature type="strand" evidence="15">
    <location>
        <begin position="758"/>
        <end position="761"/>
    </location>
</feature>
<feature type="strand" evidence="15">
    <location>
        <begin position="768"/>
        <end position="770"/>
    </location>
</feature>
<feature type="helix" evidence="15">
    <location>
        <begin position="780"/>
        <end position="793"/>
    </location>
</feature>
<feature type="helix" evidence="15">
    <location>
        <begin position="796"/>
        <end position="804"/>
    </location>
</feature>
<feature type="strand" evidence="15">
    <location>
        <begin position="807"/>
        <end position="810"/>
    </location>
</feature>